<proteinExistence type="inferred from homology"/>
<reference key="1">
    <citation type="submission" date="2008-08" db="EMBL/GenBank/DDBJ databases">
        <title>Complete sequence of Vibrio fischeri strain MJ11.</title>
        <authorList>
            <person name="Mandel M.J."/>
            <person name="Stabb E.V."/>
            <person name="Ruby E.G."/>
            <person name="Ferriera S."/>
            <person name="Johnson J."/>
            <person name="Kravitz S."/>
            <person name="Beeson K."/>
            <person name="Sutton G."/>
            <person name="Rogers Y.-H."/>
            <person name="Friedman R."/>
            <person name="Frazier M."/>
            <person name="Venter J.C."/>
        </authorList>
    </citation>
    <scope>NUCLEOTIDE SEQUENCE [LARGE SCALE GENOMIC DNA]</scope>
    <source>
        <strain>MJ11</strain>
    </source>
</reference>
<evidence type="ECO:0000255" key="1">
    <source>
        <dbReference type="HAMAP-Rule" id="MF_00540"/>
    </source>
</evidence>
<gene>
    <name evidence="1" type="primary">add</name>
    <name type="ordered locus">VFMJ11_0091</name>
</gene>
<organism>
    <name type="scientific">Aliivibrio fischeri (strain MJ11)</name>
    <name type="common">Vibrio fischeri</name>
    <dbReference type="NCBI Taxonomy" id="388396"/>
    <lineage>
        <taxon>Bacteria</taxon>
        <taxon>Pseudomonadati</taxon>
        <taxon>Pseudomonadota</taxon>
        <taxon>Gammaproteobacteria</taxon>
        <taxon>Vibrionales</taxon>
        <taxon>Vibrionaceae</taxon>
        <taxon>Aliivibrio</taxon>
    </lineage>
</organism>
<name>ADD_ALIFM</name>
<dbReference type="EC" id="3.5.4.4" evidence="1"/>
<dbReference type="EMBL" id="CP001139">
    <property type="protein sequence ID" value="ACH64946.1"/>
    <property type="molecule type" value="Genomic_DNA"/>
</dbReference>
<dbReference type="RefSeq" id="WP_012532722.1">
    <property type="nucleotide sequence ID" value="NC_011184.1"/>
</dbReference>
<dbReference type="SMR" id="B5FFC4"/>
<dbReference type="KEGG" id="vfm:VFMJ11_0091"/>
<dbReference type="HOGENOM" id="CLU_039228_0_2_6"/>
<dbReference type="Proteomes" id="UP000001857">
    <property type="component" value="Chromosome I"/>
</dbReference>
<dbReference type="GO" id="GO:0005829">
    <property type="term" value="C:cytosol"/>
    <property type="evidence" value="ECO:0007669"/>
    <property type="project" value="TreeGrafter"/>
</dbReference>
<dbReference type="GO" id="GO:0046936">
    <property type="term" value="F:2'-deoxyadenosine deaminase activity"/>
    <property type="evidence" value="ECO:0007669"/>
    <property type="project" value="RHEA"/>
</dbReference>
<dbReference type="GO" id="GO:0004000">
    <property type="term" value="F:adenosine deaminase activity"/>
    <property type="evidence" value="ECO:0007669"/>
    <property type="project" value="UniProtKB-UniRule"/>
</dbReference>
<dbReference type="GO" id="GO:0008270">
    <property type="term" value="F:zinc ion binding"/>
    <property type="evidence" value="ECO:0007669"/>
    <property type="project" value="UniProtKB-UniRule"/>
</dbReference>
<dbReference type="GO" id="GO:0006154">
    <property type="term" value="P:adenosine catabolic process"/>
    <property type="evidence" value="ECO:0007669"/>
    <property type="project" value="TreeGrafter"/>
</dbReference>
<dbReference type="GO" id="GO:0043103">
    <property type="term" value="P:hypoxanthine salvage"/>
    <property type="evidence" value="ECO:0007669"/>
    <property type="project" value="TreeGrafter"/>
</dbReference>
<dbReference type="GO" id="GO:0046103">
    <property type="term" value="P:inosine biosynthetic process"/>
    <property type="evidence" value="ECO:0007669"/>
    <property type="project" value="TreeGrafter"/>
</dbReference>
<dbReference type="GO" id="GO:0009117">
    <property type="term" value="P:nucleotide metabolic process"/>
    <property type="evidence" value="ECO:0007669"/>
    <property type="project" value="UniProtKB-KW"/>
</dbReference>
<dbReference type="GO" id="GO:0009168">
    <property type="term" value="P:purine ribonucleoside monophosphate biosynthetic process"/>
    <property type="evidence" value="ECO:0007669"/>
    <property type="project" value="UniProtKB-UniRule"/>
</dbReference>
<dbReference type="FunFam" id="3.20.20.140:FF:000009">
    <property type="entry name" value="Adenosine deaminase"/>
    <property type="match status" value="1"/>
</dbReference>
<dbReference type="Gene3D" id="3.20.20.140">
    <property type="entry name" value="Metal-dependent hydrolases"/>
    <property type="match status" value="1"/>
</dbReference>
<dbReference type="HAMAP" id="MF_00540">
    <property type="entry name" value="A_deaminase"/>
    <property type="match status" value="1"/>
</dbReference>
<dbReference type="InterPro" id="IPR028893">
    <property type="entry name" value="A_deaminase"/>
</dbReference>
<dbReference type="InterPro" id="IPR001365">
    <property type="entry name" value="A_deaminase_dom"/>
</dbReference>
<dbReference type="InterPro" id="IPR006330">
    <property type="entry name" value="Ado/ade_deaminase"/>
</dbReference>
<dbReference type="InterPro" id="IPR032466">
    <property type="entry name" value="Metal_Hydrolase"/>
</dbReference>
<dbReference type="NCBIfam" id="TIGR01430">
    <property type="entry name" value="aden_deam"/>
    <property type="match status" value="1"/>
</dbReference>
<dbReference type="NCBIfam" id="NF006846">
    <property type="entry name" value="PRK09358.1-1"/>
    <property type="match status" value="1"/>
</dbReference>
<dbReference type="PANTHER" id="PTHR11409">
    <property type="entry name" value="ADENOSINE DEAMINASE"/>
    <property type="match status" value="1"/>
</dbReference>
<dbReference type="PANTHER" id="PTHR11409:SF43">
    <property type="entry name" value="ADENOSINE DEAMINASE"/>
    <property type="match status" value="1"/>
</dbReference>
<dbReference type="Pfam" id="PF00962">
    <property type="entry name" value="A_deaminase"/>
    <property type="match status" value="1"/>
</dbReference>
<dbReference type="SUPFAM" id="SSF51556">
    <property type="entry name" value="Metallo-dependent hydrolases"/>
    <property type="match status" value="1"/>
</dbReference>
<protein>
    <recommendedName>
        <fullName evidence="1">Adenosine deaminase</fullName>
        <ecNumber evidence="1">3.5.4.4</ecNumber>
    </recommendedName>
    <alternativeName>
        <fullName evidence="1">Adenosine aminohydrolase</fullName>
    </alternativeName>
</protein>
<keyword id="KW-0378">Hydrolase</keyword>
<keyword id="KW-0479">Metal-binding</keyword>
<keyword id="KW-0546">Nucleotide metabolism</keyword>
<keyword id="KW-0862">Zinc</keyword>
<feature type="chain" id="PRO_1000128873" description="Adenosine deaminase">
    <location>
        <begin position="1"/>
        <end position="333"/>
    </location>
</feature>
<feature type="active site" description="Proton donor" evidence="1">
    <location>
        <position position="200"/>
    </location>
</feature>
<feature type="binding site" evidence="1">
    <location>
        <position position="12"/>
    </location>
    <ligand>
        <name>Zn(2+)</name>
        <dbReference type="ChEBI" id="CHEBI:29105"/>
        <note>catalytic</note>
    </ligand>
</feature>
<feature type="binding site" evidence="1">
    <location>
        <position position="14"/>
    </location>
    <ligand>
        <name>substrate</name>
    </ligand>
</feature>
<feature type="binding site" evidence="1">
    <location>
        <position position="14"/>
    </location>
    <ligand>
        <name>Zn(2+)</name>
        <dbReference type="ChEBI" id="CHEBI:29105"/>
        <note>catalytic</note>
    </ligand>
</feature>
<feature type="binding site" evidence="1">
    <location>
        <position position="16"/>
    </location>
    <ligand>
        <name>substrate</name>
    </ligand>
</feature>
<feature type="binding site" evidence="1">
    <location>
        <position position="170"/>
    </location>
    <ligand>
        <name>substrate</name>
    </ligand>
</feature>
<feature type="binding site" evidence="1">
    <location>
        <position position="197"/>
    </location>
    <ligand>
        <name>Zn(2+)</name>
        <dbReference type="ChEBI" id="CHEBI:29105"/>
        <note>catalytic</note>
    </ligand>
</feature>
<feature type="binding site" evidence="1">
    <location>
        <position position="278"/>
    </location>
    <ligand>
        <name>Zn(2+)</name>
        <dbReference type="ChEBI" id="CHEBI:29105"/>
        <note>catalytic</note>
    </ligand>
</feature>
<feature type="binding site" evidence="1">
    <location>
        <position position="279"/>
    </location>
    <ligand>
        <name>substrate</name>
    </ligand>
</feature>
<feature type="site" description="Important for catalytic activity" evidence="1">
    <location>
        <position position="221"/>
    </location>
</feature>
<sequence>MIIKQLPLTDLHRHLDGNIRIETILDLGQKFGLDLPAYDIEALRPHVQIVEAEPSLVAFLSKLDWGVAVLGDLDACRRVAYENVQDAMNAQIDYAELRFSPYYMAMKHNLPIAGVVEAVVDGVEAGCRDFGIKANLIGIMSRTFGQDACQQELDGLLTQKNKLVAIDLAGDELGQPGDLFVNHFKQVKDADLRVTVHAGEAAGAASMWQAINELGAVRIGHGVKAIEDPKLMEYLAKNNIGIESCLTSNIQTSTVASFESHPIKTFLEYGVKACLNTDDPAVEGIELPHEYEVAAPKVGLTPEQLKQIQINGLDLAFLSDSEKQALRDIAAKR</sequence>
<accession>B5FFC4</accession>
<comment type="function">
    <text evidence="1">Catalyzes the hydrolytic deamination of adenosine and 2-deoxyadenosine.</text>
</comment>
<comment type="catalytic activity">
    <reaction evidence="1">
        <text>adenosine + H2O + H(+) = inosine + NH4(+)</text>
        <dbReference type="Rhea" id="RHEA:24408"/>
        <dbReference type="ChEBI" id="CHEBI:15377"/>
        <dbReference type="ChEBI" id="CHEBI:15378"/>
        <dbReference type="ChEBI" id="CHEBI:16335"/>
        <dbReference type="ChEBI" id="CHEBI:17596"/>
        <dbReference type="ChEBI" id="CHEBI:28938"/>
        <dbReference type="EC" id="3.5.4.4"/>
    </reaction>
    <physiologicalReaction direction="left-to-right" evidence="1">
        <dbReference type="Rhea" id="RHEA:24409"/>
    </physiologicalReaction>
</comment>
<comment type="catalytic activity">
    <reaction evidence="1">
        <text>2'-deoxyadenosine + H2O + H(+) = 2'-deoxyinosine + NH4(+)</text>
        <dbReference type="Rhea" id="RHEA:28190"/>
        <dbReference type="ChEBI" id="CHEBI:15377"/>
        <dbReference type="ChEBI" id="CHEBI:15378"/>
        <dbReference type="ChEBI" id="CHEBI:17256"/>
        <dbReference type="ChEBI" id="CHEBI:28938"/>
        <dbReference type="ChEBI" id="CHEBI:28997"/>
        <dbReference type="EC" id="3.5.4.4"/>
    </reaction>
    <physiologicalReaction direction="left-to-right" evidence="1">
        <dbReference type="Rhea" id="RHEA:28191"/>
    </physiologicalReaction>
</comment>
<comment type="cofactor">
    <cofactor evidence="1">
        <name>Zn(2+)</name>
        <dbReference type="ChEBI" id="CHEBI:29105"/>
    </cofactor>
    <text evidence="1">Binds 1 zinc ion per subunit.</text>
</comment>
<comment type="similarity">
    <text evidence="1">Belongs to the metallo-dependent hydrolases superfamily. Adenosine and AMP deaminases family. Adenosine deaminase subfamily.</text>
</comment>